<organism>
    <name type="scientific">Sinorhizobium fredii (strain NBRC 101917 / NGR234)</name>
    <dbReference type="NCBI Taxonomy" id="394"/>
    <lineage>
        <taxon>Bacteria</taxon>
        <taxon>Pseudomonadati</taxon>
        <taxon>Pseudomonadota</taxon>
        <taxon>Alphaproteobacteria</taxon>
        <taxon>Hyphomicrobiales</taxon>
        <taxon>Rhizobiaceae</taxon>
        <taxon>Sinorhizobium/Ensifer group</taxon>
        <taxon>Sinorhizobium</taxon>
    </lineage>
</organism>
<evidence type="ECO:0000255" key="1">
    <source>
        <dbReference type="HAMAP-Rule" id="MF_01043"/>
    </source>
</evidence>
<reference key="1">
    <citation type="journal article" date="2009" name="Appl. Environ. Microbiol.">
        <title>Rhizobium sp. strain NGR234 possesses a remarkable number of secretion systems.</title>
        <authorList>
            <person name="Schmeisser C."/>
            <person name="Liesegang H."/>
            <person name="Krysciak D."/>
            <person name="Bakkou N."/>
            <person name="Le Quere A."/>
            <person name="Wollherr A."/>
            <person name="Heinemeyer I."/>
            <person name="Morgenstern B."/>
            <person name="Pommerening-Roeser A."/>
            <person name="Flores M."/>
            <person name="Palacios R."/>
            <person name="Brenner S."/>
            <person name="Gottschalk G."/>
            <person name="Schmitz R.A."/>
            <person name="Broughton W.J."/>
            <person name="Perret X."/>
            <person name="Strittmatter A.W."/>
            <person name="Streit W.R."/>
        </authorList>
    </citation>
    <scope>NUCLEOTIDE SEQUENCE [LARGE SCALE GENOMIC DNA]</scope>
    <source>
        <strain>NBRC 101917 / NGR234</strain>
    </source>
</reference>
<protein>
    <recommendedName>
        <fullName evidence="1">Glycerol-3-phosphate acyltransferase</fullName>
    </recommendedName>
    <alternativeName>
        <fullName evidence="1">Acyl-PO4 G3P acyltransferase</fullName>
    </alternativeName>
    <alternativeName>
        <fullName evidence="1">Acyl-phosphate--glycerol-3-phosphate acyltransferase</fullName>
    </alternativeName>
    <alternativeName>
        <fullName evidence="1">G3P acyltransferase</fullName>
        <shortName evidence="1">GPAT</shortName>
        <ecNumber evidence="1">2.3.1.275</ecNumber>
    </alternativeName>
    <alternativeName>
        <fullName evidence="1">Lysophosphatidic acid synthase</fullName>
        <shortName evidence="1">LPA synthase</shortName>
    </alternativeName>
</protein>
<keyword id="KW-0997">Cell inner membrane</keyword>
<keyword id="KW-1003">Cell membrane</keyword>
<keyword id="KW-0444">Lipid biosynthesis</keyword>
<keyword id="KW-0443">Lipid metabolism</keyword>
<keyword id="KW-0472">Membrane</keyword>
<keyword id="KW-0594">Phospholipid biosynthesis</keyword>
<keyword id="KW-1208">Phospholipid metabolism</keyword>
<keyword id="KW-1185">Reference proteome</keyword>
<keyword id="KW-0808">Transferase</keyword>
<keyword id="KW-0812">Transmembrane</keyword>
<keyword id="KW-1133">Transmembrane helix</keyword>
<gene>
    <name evidence="1" type="primary">plsY</name>
    <name type="ordered locus">NGR_c10880</name>
</gene>
<sequence length="203" mass="21056">MDLFSWQLGLPATLLCLAFGYLLGSIPFGLILTRMAGLGDVRKIGSGNIGATNVLRTGNKKLAAATLLLDALKGTAAAAIASLWGVEAGIAAGLAAFLGHLFPVWLSFKGGKGVATYIGVLLGLAPLMVPAFAAIWLAAAKITRYSSLSALIATAVMPIALYATGYGKVALLFALMTVITWIKHRANIQRLLSGTESRIGEKG</sequence>
<comment type="function">
    <text evidence="1">Catalyzes the transfer of an acyl group from acyl-phosphate (acyl-PO(4)) to glycerol-3-phosphate (G3P) to form lysophosphatidic acid (LPA). This enzyme utilizes acyl-phosphate as fatty acyl donor, but not acyl-CoA or acyl-ACP.</text>
</comment>
<comment type="catalytic activity">
    <reaction evidence="1">
        <text>an acyl phosphate + sn-glycerol 3-phosphate = a 1-acyl-sn-glycero-3-phosphate + phosphate</text>
        <dbReference type="Rhea" id="RHEA:34075"/>
        <dbReference type="ChEBI" id="CHEBI:43474"/>
        <dbReference type="ChEBI" id="CHEBI:57597"/>
        <dbReference type="ChEBI" id="CHEBI:57970"/>
        <dbReference type="ChEBI" id="CHEBI:59918"/>
        <dbReference type="EC" id="2.3.1.275"/>
    </reaction>
</comment>
<comment type="pathway">
    <text evidence="1">Lipid metabolism; phospholipid metabolism.</text>
</comment>
<comment type="subunit">
    <text evidence="1">Probably interacts with PlsX.</text>
</comment>
<comment type="subcellular location">
    <subcellularLocation>
        <location evidence="1">Cell inner membrane</location>
        <topology evidence="1">Multi-pass membrane protein</topology>
    </subcellularLocation>
</comment>
<comment type="similarity">
    <text evidence="1">Belongs to the PlsY family.</text>
</comment>
<name>PLSY_SINFN</name>
<feature type="chain" id="PRO_1000149579" description="Glycerol-3-phosphate acyltransferase">
    <location>
        <begin position="1"/>
        <end position="203"/>
    </location>
</feature>
<feature type="transmembrane region" description="Helical" evidence="1">
    <location>
        <begin position="12"/>
        <end position="32"/>
    </location>
</feature>
<feature type="transmembrane region" description="Helical" evidence="1">
    <location>
        <begin position="66"/>
        <end position="86"/>
    </location>
</feature>
<feature type="transmembrane region" description="Helical" evidence="1">
    <location>
        <begin position="88"/>
        <end position="108"/>
    </location>
</feature>
<feature type="transmembrane region" description="Helical" evidence="1">
    <location>
        <begin position="118"/>
        <end position="138"/>
    </location>
</feature>
<feature type="transmembrane region" description="Helical" evidence="1">
    <location>
        <begin position="159"/>
        <end position="179"/>
    </location>
</feature>
<proteinExistence type="inferred from homology"/>
<dbReference type="EC" id="2.3.1.275" evidence="1"/>
<dbReference type="EMBL" id="CP001389">
    <property type="protein sequence ID" value="ACP24874.1"/>
    <property type="molecule type" value="Genomic_DNA"/>
</dbReference>
<dbReference type="RefSeq" id="WP_012707657.1">
    <property type="nucleotide sequence ID" value="NC_012587.1"/>
</dbReference>
<dbReference type="RefSeq" id="YP_002825627.1">
    <property type="nucleotide sequence ID" value="NC_012587.1"/>
</dbReference>
<dbReference type="SMR" id="C3MA95"/>
<dbReference type="STRING" id="394.NGR_c10880"/>
<dbReference type="KEGG" id="rhi:NGR_c10880"/>
<dbReference type="PATRIC" id="fig|394.7.peg.3914"/>
<dbReference type="eggNOG" id="COG0344">
    <property type="taxonomic scope" value="Bacteria"/>
</dbReference>
<dbReference type="HOGENOM" id="CLU_081254_1_0_5"/>
<dbReference type="OrthoDB" id="9777124at2"/>
<dbReference type="UniPathway" id="UPA00085"/>
<dbReference type="Proteomes" id="UP000001054">
    <property type="component" value="Chromosome"/>
</dbReference>
<dbReference type="GO" id="GO:0005886">
    <property type="term" value="C:plasma membrane"/>
    <property type="evidence" value="ECO:0007669"/>
    <property type="project" value="UniProtKB-SubCell"/>
</dbReference>
<dbReference type="GO" id="GO:0043772">
    <property type="term" value="F:acyl-phosphate glycerol-3-phosphate acyltransferase activity"/>
    <property type="evidence" value="ECO:0007669"/>
    <property type="project" value="UniProtKB-UniRule"/>
</dbReference>
<dbReference type="GO" id="GO:0008654">
    <property type="term" value="P:phospholipid biosynthetic process"/>
    <property type="evidence" value="ECO:0007669"/>
    <property type="project" value="UniProtKB-UniRule"/>
</dbReference>
<dbReference type="HAMAP" id="MF_01043">
    <property type="entry name" value="PlsY"/>
    <property type="match status" value="1"/>
</dbReference>
<dbReference type="InterPro" id="IPR003811">
    <property type="entry name" value="G3P_acylTferase_PlsY"/>
</dbReference>
<dbReference type="NCBIfam" id="TIGR00023">
    <property type="entry name" value="glycerol-3-phosphate 1-O-acyltransferase PlsY"/>
    <property type="match status" value="1"/>
</dbReference>
<dbReference type="PANTHER" id="PTHR30309:SF0">
    <property type="entry name" value="GLYCEROL-3-PHOSPHATE ACYLTRANSFERASE-RELATED"/>
    <property type="match status" value="1"/>
</dbReference>
<dbReference type="PANTHER" id="PTHR30309">
    <property type="entry name" value="INNER MEMBRANE PROTEIN YGIH"/>
    <property type="match status" value="1"/>
</dbReference>
<dbReference type="Pfam" id="PF02660">
    <property type="entry name" value="G3P_acyltransf"/>
    <property type="match status" value="1"/>
</dbReference>
<dbReference type="SMART" id="SM01207">
    <property type="entry name" value="G3P_acyltransf"/>
    <property type="match status" value="1"/>
</dbReference>
<accession>C3MA95</accession>